<comment type="function">
    <text evidence="3">Removes dipeptides from the C-termini of N-blocked tripeptides, tetrapeptides and larger peptides.</text>
</comment>
<comment type="catalytic activity">
    <reaction>
        <text>Hydrolysis of unblocked, C-terminal dipeptides from oligopeptides, with broad specificity. Does not hydrolyze bonds in which P1' is Pro, or both P1 and P1' are Gly.</text>
        <dbReference type="EC" id="3.4.15.5"/>
    </reaction>
</comment>
<comment type="cofactor">
    <cofactor evidence="1">
        <name>Zn(2+)</name>
        <dbReference type="ChEBI" id="CHEBI:29105"/>
    </cofactor>
    <text evidence="1">Binds 1 zinc ion.</text>
</comment>
<comment type="activity regulation">
    <text evidence="3">Stimulated by Mn(2+), Mg(2+), Co(2+) and Ca(2+), inhibited by Cu(2+), Ni(2+), Zn(2+), chymostatin and 1,10-phenanthroline.</text>
</comment>
<comment type="subcellular location">
    <subcellularLocation>
        <location evidence="6">Cytoplasm</location>
    </subcellularLocation>
</comment>
<comment type="disruption phenotype">
    <text evidence="3">Unable to grow on N-benzoyl-Gly-His-Leu as a nitrogen source.</text>
</comment>
<comment type="similarity">
    <text evidence="5">Belongs to the peptidase M3 family.</text>
</comment>
<accession>P24171</accession>
<accession>P78305</accession>
<name>DCP_ECOLI</name>
<dbReference type="EC" id="3.4.15.5"/>
<dbReference type="EMBL" id="X57947">
    <property type="protein sequence ID" value="CAA41014.1"/>
    <property type="molecule type" value="Genomic_DNA"/>
</dbReference>
<dbReference type="EMBL" id="U00096">
    <property type="protein sequence ID" value="AAC74611.1"/>
    <property type="molecule type" value="Genomic_DNA"/>
</dbReference>
<dbReference type="EMBL" id="AP009048">
    <property type="protein sequence ID" value="BAA15228.1"/>
    <property type="molecule type" value="Genomic_DNA"/>
</dbReference>
<dbReference type="PIR" id="E64908">
    <property type="entry name" value="E64908"/>
</dbReference>
<dbReference type="RefSeq" id="NP_416056.1">
    <property type="nucleotide sequence ID" value="NC_000913.3"/>
</dbReference>
<dbReference type="RefSeq" id="WP_000210373.1">
    <property type="nucleotide sequence ID" value="NZ_SSZK01000001.1"/>
</dbReference>
<dbReference type="PDB" id="1Y79">
    <property type="method" value="X-ray"/>
    <property type="resolution" value="2.00 A"/>
    <property type="chains" value="1=2-681"/>
</dbReference>
<dbReference type="PDBsum" id="1Y79"/>
<dbReference type="SMR" id="P24171"/>
<dbReference type="BioGRID" id="4261739">
    <property type="interactions" value="57"/>
</dbReference>
<dbReference type="FunCoup" id="P24171">
    <property type="interactions" value="317"/>
</dbReference>
<dbReference type="IntAct" id="P24171">
    <property type="interactions" value="4"/>
</dbReference>
<dbReference type="STRING" id="511145.b1538"/>
<dbReference type="BindingDB" id="P24171"/>
<dbReference type="ChEMBL" id="CHEMBL3259514"/>
<dbReference type="MEROPS" id="M03.005"/>
<dbReference type="jPOST" id="P24171"/>
<dbReference type="PaxDb" id="511145-b1538"/>
<dbReference type="EnsemblBacteria" id="AAC74611">
    <property type="protein sequence ID" value="AAC74611"/>
    <property type="gene ID" value="b1538"/>
</dbReference>
<dbReference type="GeneID" id="946084"/>
<dbReference type="KEGG" id="ecj:JW1531"/>
<dbReference type="KEGG" id="eco:b1538"/>
<dbReference type="KEGG" id="ecoc:C3026_08885"/>
<dbReference type="PATRIC" id="fig|1411691.4.peg.727"/>
<dbReference type="EchoBASE" id="EB0208"/>
<dbReference type="eggNOG" id="COG0339">
    <property type="taxonomic scope" value="Bacteria"/>
</dbReference>
<dbReference type="HOGENOM" id="CLU_001805_4_0_6"/>
<dbReference type="InParanoid" id="P24171"/>
<dbReference type="OMA" id="EPMLKNR"/>
<dbReference type="OrthoDB" id="9773538at2"/>
<dbReference type="PhylomeDB" id="P24171"/>
<dbReference type="BioCyc" id="EcoCyc:EG10212-MONOMER"/>
<dbReference type="BioCyc" id="MetaCyc:EG10212-MONOMER"/>
<dbReference type="BRENDA" id="3.4.15.5">
    <property type="organism ID" value="2026"/>
</dbReference>
<dbReference type="EvolutionaryTrace" id="P24171"/>
<dbReference type="PRO" id="PR:P24171"/>
<dbReference type="Proteomes" id="UP000000625">
    <property type="component" value="Chromosome"/>
</dbReference>
<dbReference type="GO" id="GO:0005737">
    <property type="term" value="C:cytoplasm"/>
    <property type="evidence" value="ECO:0000314"/>
    <property type="project" value="EcoCyc"/>
</dbReference>
<dbReference type="GO" id="GO:0005829">
    <property type="term" value="C:cytosol"/>
    <property type="evidence" value="ECO:0000314"/>
    <property type="project" value="EcoCyc"/>
</dbReference>
<dbReference type="GO" id="GO:0030288">
    <property type="term" value="C:outer membrane-bounded periplasmic space"/>
    <property type="evidence" value="ECO:0000314"/>
    <property type="project" value="EcoCyc"/>
</dbReference>
<dbReference type="GO" id="GO:0004180">
    <property type="term" value="F:carboxypeptidase activity"/>
    <property type="evidence" value="ECO:0000314"/>
    <property type="project" value="EcoCyc"/>
</dbReference>
<dbReference type="GO" id="GO:0046872">
    <property type="term" value="F:metal ion binding"/>
    <property type="evidence" value="ECO:0007669"/>
    <property type="project" value="UniProtKB-KW"/>
</dbReference>
<dbReference type="GO" id="GO:0004222">
    <property type="term" value="F:metalloendopeptidase activity"/>
    <property type="evidence" value="ECO:0007669"/>
    <property type="project" value="InterPro"/>
</dbReference>
<dbReference type="GO" id="GO:0008241">
    <property type="term" value="F:peptidyl-dipeptidase activity"/>
    <property type="evidence" value="ECO:0007669"/>
    <property type="project" value="UniProtKB-EC"/>
</dbReference>
<dbReference type="GO" id="GO:0006508">
    <property type="term" value="P:proteolysis"/>
    <property type="evidence" value="ECO:0000315"/>
    <property type="project" value="EcoCyc"/>
</dbReference>
<dbReference type="CDD" id="cd06456">
    <property type="entry name" value="M3A_DCP"/>
    <property type="match status" value="1"/>
</dbReference>
<dbReference type="FunFam" id="1.10.1370.40:FF:000001">
    <property type="entry name" value="Dipeptidyl carboxypeptidase II"/>
    <property type="match status" value="2"/>
</dbReference>
<dbReference type="FunFam" id="3.40.390.10:FF:000009">
    <property type="entry name" value="Oligopeptidase A"/>
    <property type="match status" value="1"/>
</dbReference>
<dbReference type="Gene3D" id="1.10.1370.40">
    <property type="match status" value="1"/>
</dbReference>
<dbReference type="Gene3D" id="3.40.390.10">
    <property type="entry name" value="Collagenase (Catalytic Domain)"/>
    <property type="match status" value="1"/>
</dbReference>
<dbReference type="Gene3D" id="1.10.1370.10">
    <property type="entry name" value="Neurolysin, domain 3"/>
    <property type="match status" value="1"/>
</dbReference>
<dbReference type="InterPro" id="IPR034005">
    <property type="entry name" value="M3A_DCP"/>
</dbReference>
<dbReference type="InterPro" id="IPR024079">
    <property type="entry name" value="MetalloPept_cat_dom_sf"/>
</dbReference>
<dbReference type="InterPro" id="IPR024077">
    <property type="entry name" value="Neurolysin/TOP_dom2"/>
</dbReference>
<dbReference type="InterPro" id="IPR045090">
    <property type="entry name" value="Pept_M3A_M3B"/>
</dbReference>
<dbReference type="InterPro" id="IPR001567">
    <property type="entry name" value="Pept_M3A_M3B_dom"/>
</dbReference>
<dbReference type="NCBIfam" id="NF007624">
    <property type="entry name" value="PRK10280.1"/>
    <property type="match status" value="1"/>
</dbReference>
<dbReference type="PANTHER" id="PTHR43660">
    <property type="entry name" value="DIPEPTIDYL CARBOXYPEPTIDASE"/>
    <property type="match status" value="1"/>
</dbReference>
<dbReference type="PANTHER" id="PTHR43660:SF1">
    <property type="entry name" value="DIPEPTIDYL CARBOXYPEPTIDASE"/>
    <property type="match status" value="1"/>
</dbReference>
<dbReference type="Pfam" id="PF01432">
    <property type="entry name" value="Peptidase_M3"/>
    <property type="match status" value="1"/>
</dbReference>
<dbReference type="SUPFAM" id="SSF55486">
    <property type="entry name" value="Metalloproteases ('zincins'), catalytic domain"/>
    <property type="match status" value="1"/>
</dbReference>
<dbReference type="PROSITE" id="PS00142">
    <property type="entry name" value="ZINC_PROTEASE"/>
    <property type="match status" value="1"/>
</dbReference>
<proteinExistence type="evidence at protein level"/>
<keyword id="KW-0002">3D-structure</keyword>
<keyword id="KW-0106">Calcium</keyword>
<keyword id="KW-0121">Carboxypeptidase</keyword>
<keyword id="KW-0963">Cytoplasm</keyword>
<keyword id="KW-0903">Direct protein sequencing</keyword>
<keyword id="KW-0378">Hydrolase</keyword>
<keyword id="KW-0479">Metal-binding</keyword>
<keyword id="KW-0482">Metalloprotease</keyword>
<keyword id="KW-0645">Protease</keyword>
<keyword id="KW-1185">Reference proteome</keyword>
<keyword id="KW-0862">Zinc</keyword>
<gene>
    <name evidence="4" type="primary">dcp</name>
    <name type="ordered locus">b1538</name>
    <name type="ordered locus">JW1531</name>
</gene>
<reference key="1">
    <citation type="journal article" date="1993" name="J. Bacteriol.">
        <title>dcp gene of Escherichia coli: cloning, sequencing, transcript mapping, and characterization of the gene product.</title>
        <authorList>
            <person name="Henrich B."/>
            <person name="Becker S."/>
            <person name="Schroeder U."/>
            <person name="Plapp R."/>
        </authorList>
    </citation>
    <scope>NUCLEOTIDE SEQUENCE [GENOMIC DNA]</scope>
    <scope>PROTEIN SEQUENCE OF 2-10</scope>
    <scope>FUNCTION</scope>
    <scope>ACTIVITY REGULATION</scope>
    <scope>SUBCELLULAR LOCATION</scope>
    <scope>DISRUPTION PHENOTYPE</scope>
    <source>
        <strain>K12</strain>
    </source>
</reference>
<reference key="2">
    <citation type="journal article" date="1996" name="DNA Res.">
        <title>A 570-kb DNA sequence of the Escherichia coli K-12 genome corresponding to the 28.0-40.1 min region on the linkage map.</title>
        <authorList>
            <person name="Aiba H."/>
            <person name="Baba T."/>
            <person name="Fujita K."/>
            <person name="Hayashi K."/>
            <person name="Inada T."/>
            <person name="Isono K."/>
            <person name="Itoh T."/>
            <person name="Kasai H."/>
            <person name="Kashimoto K."/>
            <person name="Kimura S."/>
            <person name="Kitakawa M."/>
            <person name="Kitagawa M."/>
            <person name="Makino K."/>
            <person name="Miki T."/>
            <person name="Mizobuchi K."/>
            <person name="Mori H."/>
            <person name="Mori T."/>
            <person name="Motomura K."/>
            <person name="Nakade S."/>
            <person name="Nakamura Y."/>
            <person name="Nashimoto H."/>
            <person name="Nishio Y."/>
            <person name="Oshima T."/>
            <person name="Saito N."/>
            <person name="Sampei G."/>
            <person name="Seki Y."/>
            <person name="Sivasundaram S."/>
            <person name="Tagami H."/>
            <person name="Takeda J."/>
            <person name="Takemoto K."/>
            <person name="Takeuchi Y."/>
            <person name="Wada C."/>
            <person name="Yamamoto Y."/>
            <person name="Horiuchi T."/>
        </authorList>
    </citation>
    <scope>NUCLEOTIDE SEQUENCE [LARGE SCALE GENOMIC DNA]</scope>
    <source>
        <strain>K12 / W3110 / ATCC 27325 / DSM 5911</strain>
    </source>
</reference>
<reference key="3">
    <citation type="journal article" date="1997" name="Science">
        <title>The complete genome sequence of Escherichia coli K-12.</title>
        <authorList>
            <person name="Blattner F.R."/>
            <person name="Plunkett G. III"/>
            <person name="Bloch C.A."/>
            <person name="Perna N.T."/>
            <person name="Burland V."/>
            <person name="Riley M."/>
            <person name="Collado-Vides J."/>
            <person name="Glasner J.D."/>
            <person name="Rode C.K."/>
            <person name="Mayhew G.F."/>
            <person name="Gregor J."/>
            <person name="Davis N.W."/>
            <person name="Kirkpatrick H.A."/>
            <person name="Goeden M.A."/>
            <person name="Rose D.J."/>
            <person name="Mau B."/>
            <person name="Shao Y."/>
        </authorList>
    </citation>
    <scope>NUCLEOTIDE SEQUENCE [LARGE SCALE GENOMIC DNA]</scope>
    <source>
        <strain>K12 / MG1655 / ATCC 47076</strain>
    </source>
</reference>
<reference key="4">
    <citation type="journal article" date="2006" name="Mol. Syst. Biol.">
        <title>Highly accurate genome sequences of Escherichia coli K-12 strains MG1655 and W3110.</title>
        <authorList>
            <person name="Hayashi K."/>
            <person name="Morooka N."/>
            <person name="Yamamoto Y."/>
            <person name="Fujita K."/>
            <person name="Isono K."/>
            <person name="Choi S."/>
            <person name="Ohtsubo E."/>
            <person name="Baba T."/>
            <person name="Wanner B.L."/>
            <person name="Mori H."/>
            <person name="Horiuchi T."/>
        </authorList>
    </citation>
    <scope>NUCLEOTIDE SEQUENCE [LARGE SCALE GENOMIC DNA]</scope>
    <source>
        <strain>K12 / W3110 / ATCC 27325 / DSM 5911</strain>
    </source>
</reference>
<evidence type="ECO:0000250" key="1"/>
<evidence type="ECO:0000255" key="2">
    <source>
        <dbReference type="PROSITE-ProRule" id="PRU10095"/>
    </source>
</evidence>
<evidence type="ECO:0000269" key="3">
    <source>
    </source>
</evidence>
<evidence type="ECO:0000303" key="4">
    <source>
    </source>
</evidence>
<evidence type="ECO:0000305" key="5"/>
<evidence type="ECO:0000305" key="6">
    <source>
    </source>
</evidence>
<evidence type="ECO:0007829" key="7">
    <source>
        <dbReference type="PDB" id="1Y79"/>
    </source>
</evidence>
<organism>
    <name type="scientific">Escherichia coli (strain K12)</name>
    <dbReference type="NCBI Taxonomy" id="83333"/>
    <lineage>
        <taxon>Bacteria</taxon>
        <taxon>Pseudomonadati</taxon>
        <taxon>Pseudomonadota</taxon>
        <taxon>Gammaproteobacteria</taxon>
        <taxon>Enterobacterales</taxon>
        <taxon>Enterobacteriaceae</taxon>
        <taxon>Escherichia</taxon>
    </lineage>
</organism>
<protein>
    <recommendedName>
        <fullName evidence="4">Dipeptidyl carboxypeptidase</fullName>
        <ecNumber>3.4.15.5</ecNumber>
    </recommendedName>
    <alternativeName>
        <fullName>Peptidyl-dipeptidase Dcp</fullName>
    </alternativeName>
</protein>
<feature type="initiator methionine" description="Removed" evidence="3">
    <location>
        <position position="1"/>
    </location>
</feature>
<feature type="chain" id="PRO_0000078157" description="Dipeptidyl carboxypeptidase">
    <location>
        <begin position="2"/>
        <end position="681"/>
    </location>
</feature>
<feature type="active site" evidence="2">
    <location>
        <position position="471"/>
    </location>
</feature>
<feature type="binding site" evidence="2">
    <location>
        <position position="470"/>
    </location>
    <ligand>
        <name>Zn(2+)</name>
        <dbReference type="ChEBI" id="CHEBI:29105"/>
        <note>catalytic</note>
    </ligand>
</feature>
<feature type="binding site" evidence="2">
    <location>
        <position position="474"/>
    </location>
    <ligand>
        <name>Zn(2+)</name>
        <dbReference type="ChEBI" id="CHEBI:29105"/>
        <note>catalytic</note>
    </ligand>
</feature>
<feature type="binding site" evidence="2">
    <location>
        <position position="477"/>
    </location>
    <ligand>
        <name>Zn(2+)</name>
        <dbReference type="ChEBI" id="CHEBI:29105"/>
        <note>catalytic</note>
    </ligand>
</feature>
<feature type="sequence conflict" description="In Ref. 1; CAA41014." evidence="5" ref="1">
    <original>IH</original>
    <variation>LL</variation>
    <location>
        <begin position="139"/>
        <end position="140"/>
    </location>
</feature>
<feature type="helix" evidence="7">
    <location>
        <begin position="6"/>
        <end position="8"/>
    </location>
</feature>
<feature type="helix" evidence="7">
    <location>
        <begin position="14"/>
        <end position="16"/>
    </location>
</feature>
<feature type="turn" evidence="7">
    <location>
        <begin position="20"/>
        <end position="22"/>
    </location>
</feature>
<feature type="helix" evidence="7">
    <location>
        <begin position="25"/>
        <end position="27"/>
    </location>
</feature>
<feature type="helix" evidence="7">
    <location>
        <begin position="28"/>
        <end position="46"/>
    </location>
</feature>
<feature type="strand" evidence="7">
    <location>
        <begin position="49"/>
        <end position="52"/>
    </location>
</feature>
<feature type="turn" evidence="7">
    <location>
        <begin position="55"/>
        <end position="58"/>
    </location>
</feature>
<feature type="helix" evidence="7">
    <location>
        <begin position="59"/>
        <end position="64"/>
    </location>
</feature>
<feature type="helix" evidence="7">
    <location>
        <begin position="67"/>
        <end position="82"/>
    </location>
</feature>
<feature type="helix" evidence="7">
    <location>
        <begin position="86"/>
        <end position="107"/>
    </location>
</feature>
<feature type="helix" evidence="7">
    <location>
        <begin position="110"/>
        <end position="121"/>
    </location>
</feature>
<feature type="turn" evidence="7">
    <location>
        <begin position="122"/>
        <end position="125"/>
    </location>
</feature>
<feature type="helix" evidence="7">
    <location>
        <begin position="130"/>
        <end position="146"/>
    </location>
</feature>
<feature type="turn" evidence="7">
    <location>
        <begin position="147"/>
        <end position="149"/>
    </location>
</feature>
<feature type="helix" evidence="7">
    <location>
        <begin position="152"/>
        <end position="181"/>
    </location>
</feature>
<feature type="strand" evidence="7">
    <location>
        <begin position="184"/>
        <end position="188"/>
    </location>
</feature>
<feature type="helix" evidence="7">
    <location>
        <begin position="190"/>
        <end position="193"/>
    </location>
</feature>
<feature type="helix" evidence="7">
    <location>
        <begin position="198"/>
        <end position="210"/>
    </location>
</feature>
<feature type="strand" evidence="7">
    <location>
        <begin position="217"/>
        <end position="219"/>
    </location>
</feature>
<feature type="strand" evidence="7">
    <location>
        <begin position="223"/>
        <end position="226"/>
    </location>
</feature>
<feature type="helix" evidence="7">
    <location>
        <begin position="228"/>
        <end position="231"/>
    </location>
</feature>
<feature type="helix" evidence="7">
    <location>
        <begin position="236"/>
        <end position="247"/>
    </location>
</feature>
<feature type="turn" evidence="7">
    <location>
        <begin position="248"/>
        <end position="250"/>
    </location>
</feature>
<feature type="strand" evidence="7">
    <location>
        <begin position="252"/>
        <end position="254"/>
    </location>
</feature>
<feature type="helix" evidence="7">
    <location>
        <begin position="259"/>
        <end position="275"/>
    </location>
</feature>
<feature type="helix" evidence="7">
    <location>
        <begin position="281"/>
        <end position="286"/>
    </location>
</feature>
<feature type="helix" evidence="7">
    <location>
        <begin position="294"/>
        <end position="325"/>
    </location>
</feature>
<feature type="helix" evidence="7">
    <location>
        <begin position="334"/>
        <end position="336"/>
    </location>
</feature>
<feature type="helix" evidence="7">
    <location>
        <begin position="337"/>
        <end position="349"/>
    </location>
</feature>
<feature type="helix" evidence="7">
    <location>
        <begin position="353"/>
        <end position="355"/>
    </location>
</feature>
<feature type="helix" evidence="7">
    <location>
        <begin position="357"/>
        <end position="359"/>
    </location>
</feature>
<feature type="helix" evidence="7">
    <location>
        <begin position="362"/>
        <end position="368"/>
    </location>
</feature>
<feature type="helix" evidence="7">
    <location>
        <begin position="370"/>
        <end position="378"/>
    </location>
</feature>
<feature type="strand" evidence="7">
    <location>
        <begin position="381"/>
        <end position="388"/>
    </location>
</feature>
<feature type="strand" evidence="7">
    <location>
        <begin position="396"/>
        <end position="401"/>
    </location>
</feature>
<feature type="strand" evidence="7">
    <location>
        <begin position="407"/>
        <end position="416"/>
    </location>
</feature>
<feature type="strand" evidence="7">
    <location>
        <begin position="426"/>
        <end position="431"/>
    </location>
</feature>
<feature type="turn" evidence="7">
    <location>
        <begin position="435"/>
        <end position="438"/>
    </location>
</feature>
<feature type="strand" evidence="7">
    <location>
        <begin position="442"/>
        <end position="449"/>
    </location>
</feature>
<feature type="helix" evidence="7">
    <location>
        <begin position="462"/>
        <end position="479"/>
    </location>
</feature>
<feature type="helix" evidence="7">
    <location>
        <begin position="486"/>
        <end position="488"/>
    </location>
</feature>
<feature type="helix" evidence="7">
    <location>
        <begin position="495"/>
        <end position="507"/>
    </location>
</feature>
<feature type="helix" evidence="7">
    <location>
        <begin position="508"/>
        <end position="510"/>
    </location>
</feature>
<feature type="helix" evidence="7">
    <location>
        <begin position="512"/>
        <end position="518"/>
    </location>
</feature>
<feature type="turn" evidence="7">
    <location>
        <begin position="522"/>
        <end position="524"/>
    </location>
</feature>
<feature type="helix" evidence="7">
    <location>
        <begin position="530"/>
        <end position="538"/>
    </location>
</feature>
<feature type="turn" evidence="7">
    <location>
        <begin position="539"/>
        <end position="543"/>
    </location>
</feature>
<feature type="helix" evidence="7">
    <location>
        <begin position="544"/>
        <end position="561"/>
    </location>
</feature>
<feature type="helix" evidence="7">
    <location>
        <begin position="566"/>
        <end position="568"/>
    </location>
</feature>
<feature type="helix" evidence="7">
    <location>
        <begin position="573"/>
        <end position="583"/>
    </location>
</feature>
<feature type="helix" evidence="7">
    <location>
        <begin position="597"/>
        <end position="599"/>
    </location>
</feature>
<feature type="helix" evidence="7">
    <location>
        <begin position="601"/>
        <end position="604"/>
    </location>
</feature>
<feature type="turn" evidence="7">
    <location>
        <begin position="609"/>
        <end position="612"/>
    </location>
</feature>
<feature type="helix" evidence="7">
    <location>
        <begin position="613"/>
        <end position="631"/>
    </location>
</feature>
<feature type="helix" evidence="7">
    <location>
        <begin position="637"/>
        <end position="646"/>
    </location>
</feature>
<feature type="turn" evidence="7">
    <location>
        <begin position="647"/>
        <end position="652"/>
    </location>
</feature>
<feature type="helix" evidence="7">
    <location>
        <begin position="656"/>
        <end position="664"/>
    </location>
</feature>
<feature type="helix" evidence="7">
    <location>
        <begin position="671"/>
        <end position="676"/>
    </location>
</feature>
<sequence>MTTMNPFLVQSTLPYLAPHFDQIANHHYRPAFDEGMQQKRAEIAAIALNPQMPDFNNTILALEQSGELLTRVTSVFFAMTAAHTNDELQRLDEQFSAELAELANDIYLNGELFARVDAVWQRRESLGLDSESIRLVEVIHQRFVLAGAKLAQADKAKLKVLNTEAATLTSQFNQRLLAANKSGGLVVNDIAQLAGMSEQEIALAAEAAREKGLDNKWLIPLLNTTQQPALAEMRDRATREKLFIAGWTRAEKNDANDTRAIIQRLVEIRAQQATLLGFPHYAAWKIADQMAKTPEAALNFMREIVPAARQRASDELASIQAVIDKQQGGFSAQPWDWAFYAEQVRREKFDLDEAQLKPYFELNTVLNEGVFWTANQLFGIKFVERFDIPVYHPDVRVWEIFDHNGVGLALFYGDFFARDSKSGGAWMGNFVEQSTLNKTHPVIYNVCNYQKPAAGEPALLLWDDVITLFHEFGHTLHGLFARQRYATLSGTNTPRDFVEFPSQINEHWATHPQVFARYARHYQSGAAMPDELQQKMRNASLFNKGYEMSELLSAALLDMRWHCLEENEAMQDVDDFELRALVAENMDLPAIPPRYRSSYFAHIFGGGYAAGYYAYLWTQMLADDGYQWFVEQGGLTRENGLRFREAILSRGNSEDLERLYRQWRGKAPKIMPMLQHRGLNI</sequence>